<proteinExistence type="evidence at protein level"/>
<name>RGS3_HUMAN</name>
<accession>P49796</accession>
<accession>A6NHA0</accession>
<accession>A8K0V1</accession>
<accession>B3KUB2</accession>
<accession>Q5VXB8</accession>
<accession>Q5VXC1</accession>
<accession>Q5VZ05</accession>
<accession>Q5VZ06</accession>
<accession>Q6ZRM5</accession>
<accession>Q8IUQ1</accession>
<accession>Q8NC47</accession>
<accession>Q8NFN4</accession>
<accession>Q8NFN5</accession>
<accession>Q8NFN6</accession>
<accession>Q8TD59</accession>
<accession>Q8TD68</accession>
<accession>Q8WV02</accession>
<accession>Q8WXA0</accession>
<sequence>MPVIPALWEVEMGRSQGQEIETILANRSHSDSTPLPNFLSGSHRPECCTCRLLTASGAQDSLPFGRRLYSGPWRSCEEVCHVSVLSVLSTSCGLSLSLPIFPGWMEWLSPDIALPRRDEWTQTSPARKRITHAKVQGAGQLRLSIDAQDRVLLLHIIEGKGLISKQPGTCDPYVKISLIPEDSRLRHQKTQTVPDCRDPAFHEHFFFPVQEEDDQKRLLVTVWNRASQSRQSGLIGCMSFGVKSLLTPDKEISGWYYLLGEHLGRTKHLKVARRRLRPLRDPLLRMPGGGDTENGKKLKITIPRGKDGFGFTICCDSPVRVQAVDSGGPAERAGLQQLDTVLQLNERPVEHWKCVELAHEIRSCPSEIILLVWRMVPQVKPGPDGGVLRRASCKSTHDLQSPPNKREKNCTHGVQARPEQRHSCHLVCDSSDGLLLGGWERYTEVAKRGGQHTLPALSRATAPTDPNYIILAPLNPGSQLLRPVYQEDTIPEESGSPSKGKSYTGLGKKSRLMKTVQTMKGHGNYQNCPVVRPHATHSSYGTYVTLAPKVLVFPVFVQPLDLCNPARTLLLSEELLLYEGRNKAAEVTLFAYSDLLLFTKEDEPGRCDVLRNPLYLQSVKLQEGSSEDLKFCVLYLAEKAECLFTLEAHSQEQKKRVCWCLSENIAKQQQLAASPPDSKMFETEADEKREMALEEGKGPGAEDSPPSKEPSPGQELPPGQDLPPNKDSPSGQEPAPSQEPLSSKDSATSEGSPPGPDAPPSKDVPPCQEPPPAQDLSPCQDLPAGQEPLPHQDPLLTKDLPAIQESPTRDLPPCQDLPPSQVSLPAKALTEDTMSSGDLLAATGDPPAAPRPAFVIPEVRLDSTYSQKAGAEQGCSGDEEDAEEAEEVEEGEEGEEDEDEDTSDDNYGERSEAKRSSMIETGQGAEGGLSLRVQNSLRRRTHSEGSLLQEPRGPCFASDTTLHCSDGEGAASTWGMPSPSTLKKELGRNGGSMHHLSLFFTGHRKMSGADTVGDDDEASRKRKSKNLAKDMKNKLGIFRRRNESPGAPPAGKADKMMKSFKPTSEEALKWGESLEKLLVHKYGLAVFQAFLRTEFSEENLEFWLACEDFKKVKSQSKMASKAKKIFAEYIAIQACKEVNLDSYTREHTKDNLQSVTRGCFDLAQKRIFGLMEKDSYPRFLRSDLYLDLINQKKMSPPL</sequence>
<protein>
    <recommendedName>
        <fullName>Regulator of G-protein signaling 3</fullName>
        <shortName>RGP3</shortName>
        <shortName>RGS3</shortName>
    </recommendedName>
</protein>
<dbReference type="EMBL" id="U27655">
    <property type="protein sequence ID" value="AAC50394.1"/>
    <property type="molecule type" value="mRNA"/>
</dbReference>
<dbReference type="EMBL" id="AF490838">
    <property type="protein sequence ID" value="AAM33253.1"/>
    <property type="molecule type" value="mRNA"/>
</dbReference>
<dbReference type="EMBL" id="AF490839">
    <property type="protein sequence ID" value="AAM33254.1"/>
    <property type="molecule type" value="mRNA"/>
</dbReference>
<dbReference type="EMBL" id="AF490840">
    <property type="protein sequence ID" value="AAM33255.1"/>
    <property type="molecule type" value="mRNA"/>
</dbReference>
<dbReference type="EMBL" id="AK074977">
    <property type="protein sequence ID" value="BAC11328.1"/>
    <property type="molecule type" value="mRNA"/>
</dbReference>
<dbReference type="EMBL" id="AK096840">
    <property type="protein sequence ID" value="BAG53374.1"/>
    <property type="molecule type" value="mRNA"/>
</dbReference>
<dbReference type="EMBL" id="AK128127">
    <property type="protein sequence ID" value="BAC87285.1"/>
    <property type="molecule type" value="mRNA"/>
</dbReference>
<dbReference type="EMBL" id="AK289666">
    <property type="protein sequence ID" value="BAF82355.1"/>
    <property type="molecule type" value="mRNA"/>
</dbReference>
<dbReference type="EMBL" id="AF493927">
    <property type="protein sequence ID" value="AAM12641.1"/>
    <property type="molecule type" value="mRNA"/>
</dbReference>
<dbReference type="EMBL" id="AF493941">
    <property type="protein sequence ID" value="AAM12655.1"/>
    <property type="molecule type" value="mRNA"/>
</dbReference>
<dbReference type="EMBL" id="AY585192">
    <property type="protein sequence ID" value="AAT79495.1"/>
    <property type="molecule type" value="mRNA"/>
</dbReference>
<dbReference type="EMBL" id="AF463495">
    <property type="protein sequence ID" value="AAL68829.1"/>
    <property type="molecule type" value="Genomic_DNA"/>
</dbReference>
<dbReference type="EMBL" id="AL137066">
    <property type="status" value="NOT_ANNOTATED_CDS"/>
    <property type="molecule type" value="Genomic_DNA"/>
</dbReference>
<dbReference type="EMBL" id="AL162727">
    <property type="status" value="NOT_ANNOTATED_CDS"/>
    <property type="molecule type" value="Genomic_DNA"/>
</dbReference>
<dbReference type="EMBL" id="AL359455">
    <property type="status" value="NOT_ANNOTATED_CDS"/>
    <property type="molecule type" value="Genomic_DNA"/>
</dbReference>
<dbReference type="EMBL" id="CH471090">
    <property type="protein sequence ID" value="EAW87388.1"/>
    <property type="molecule type" value="Genomic_DNA"/>
</dbReference>
<dbReference type="EMBL" id="CH471090">
    <property type="protein sequence ID" value="EAW87391.1"/>
    <property type="molecule type" value="Genomic_DNA"/>
</dbReference>
<dbReference type="EMBL" id="CH471090">
    <property type="protein sequence ID" value="EAW87393.1"/>
    <property type="molecule type" value="Genomic_DNA"/>
</dbReference>
<dbReference type="EMBL" id="BC019039">
    <property type="protein sequence ID" value="AAH19039.3"/>
    <property type="molecule type" value="mRNA"/>
</dbReference>
<dbReference type="EMBL" id="BC042555">
    <property type="protein sequence ID" value="AAH42555.1"/>
    <property type="molecule type" value="mRNA"/>
</dbReference>
<dbReference type="CCDS" id="CCDS35113.1">
    <molecule id="P49796-5"/>
</dbReference>
<dbReference type="CCDS" id="CCDS43869.1">
    <molecule id="P49796-6"/>
</dbReference>
<dbReference type="CCDS" id="CCDS65111.1">
    <molecule id="P49796-9"/>
</dbReference>
<dbReference type="CCDS" id="CCDS6797.1">
    <molecule id="P49796-4"/>
</dbReference>
<dbReference type="CCDS" id="CCDS6798.1">
    <molecule id="P49796-1"/>
</dbReference>
<dbReference type="PIR" id="S78089">
    <property type="entry name" value="S78089"/>
</dbReference>
<dbReference type="RefSeq" id="NP_001263189.1">
    <molecule id="P49796-1"/>
    <property type="nucleotide sequence ID" value="NM_001276260.2"/>
</dbReference>
<dbReference type="RefSeq" id="NP_001263190.1">
    <molecule id="P49796-9"/>
    <property type="nucleotide sequence ID" value="NM_001276261.2"/>
</dbReference>
<dbReference type="RefSeq" id="NP_001263191.1">
    <property type="nucleotide sequence ID" value="NM_001276262.1"/>
</dbReference>
<dbReference type="RefSeq" id="NP_001269851.1">
    <molecule id="P49796-1"/>
    <property type="nucleotide sequence ID" value="NM_001282922.2"/>
</dbReference>
<dbReference type="RefSeq" id="NP_001269852.1">
    <property type="nucleotide sequence ID" value="NM_001282923.1"/>
</dbReference>
<dbReference type="RefSeq" id="NP_001338455.1">
    <molecule id="P49796-1"/>
    <property type="nucleotide sequence ID" value="NM_001351526.2"/>
</dbReference>
<dbReference type="RefSeq" id="NP_060260.3">
    <molecule id="P49796-5"/>
    <property type="nucleotide sequence ID" value="NM_017790.4"/>
</dbReference>
<dbReference type="RefSeq" id="NP_570613.2">
    <molecule id="P49796-4"/>
    <property type="nucleotide sequence ID" value="NM_130795.4"/>
</dbReference>
<dbReference type="RefSeq" id="NP_602299.1">
    <property type="nucleotide sequence ID" value="NM_134427.2"/>
</dbReference>
<dbReference type="RefSeq" id="NP_652759.4">
    <molecule id="P49796-6"/>
    <property type="nucleotide sequence ID" value="NM_144488.8"/>
</dbReference>
<dbReference type="RefSeq" id="NP_652760.2">
    <property type="nucleotide sequence ID" value="NM_144489.3"/>
</dbReference>
<dbReference type="RefSeq" id="XP_006717282.1">
    <property type="nucleotide sequence ID" value="XM_006717219.2"/>
</dbReference>
<dbReference type="RefSeq" id="XP_006717289.1">
    <property type="nucleotide sequence ID" value="XM_006717226.2"/>
</dbReference>
<dbReference type="RefSeq" id="XP_006717293.1">
    <property type="nucleotide sequence ID" value="XM_006717230.3"/>
</dbReference>
<dbReference type="RefSeq" id="XP_011517198.1">
    <property type="nucleotide sequence ID" value="XM_011518896.1"/>
</dbReference>
<dbReference type="RefSeq" id="XP_011517199.1">
    <property type="nucleotide sequence ID" value="XM_011518897.2"/>
</dbReference>
<dbReference type="RefSeq" id="XP_011517200.1">
    <property type="nucleotide sequence ID" value="XM_011518898.1"/>
</dbReference>
<dbReference type="RefSeq" id="XP_011517202.1">
    <property type="nucleotide sequence ID" value="XM_011518900.1"/>
</dbReference>
<dbReference type="RefSeq" id="XP_011517203.1">
    <property type="nucleotide sequence ID" value="XM_011518901.1"/>
</dbReference>
<dbReference type="RefSeq" id="XP_016870494.1">
    <property type="nucleotide sequence ID" value="XM_017015005.1"/>
</dbReference>
<dbReference type="RefSeq" id="XP_016870495.1">
    <property type="nucleotide sequence ID" value="XM_017015006.1"/>
</dbReference>
<dbReference type="PDB" id="2F5Y">
    <property type="method" value="X-ray"/>
    <property type="resolution" value="2.39 A"/>
    <property type="chains" value="A/B=300-384"/>
</dbReference>
<dbReference type="PDB" id="2OJ4">
    <property type="method" value="X-ray"/>
    <property type="resolution" value="2.30 A"/>
    <property type="chains" value="A=1064-1190"/>
</dbReference>
<dbReference type="PDB" id="3FBK">
    <property type="method" value="X-ray"/>
    <property type="resolution" value="2.00 A"/>
    <property type="chains" value="A/B=134-276"/>
</dbReference>
<dbReference type="PDBsum" id="2F5Y"/>
<dbReference type="PDBsum" id="2OJ4"/>
<dbReference type="PDBsum" id="3FBK"/>
<dbReference type="BMRB" id="P49796"/>
<dbReference type="SMR" id="P49796"/>
<dbReference type="BioGRID" id="111930">
    <property type="interactions" value="65"/>
</dbReference>
<dbReference type="FunCoup" id="P49796">
    <property type="interactions" value="1582"/>
</dbReference>
<dbReference type="IntAct" id="P49796">
    <property type="interactions" value="60"/>
</dbReference>
<dbReference type="MINT" id="P49796"/>
<dbReference type="STRING" id="9606.ENSP00000363255"/>
<dbReference type="GlyGen" id="P49796">
    <property type="glycosylation" value="4 sites, 1 O-linked glycan (4 sites)"/>
</dbReference>
<dbReference type="iPTMnet" id="P49796"/>
<dbReference type="PhosphoSitePlus" id="P49796"/>
<dbReference type="SwissPalm" id="P49796"/>
<dbReference type="BioMuta" id="RGS3"/>
<dbReference type="DMDM" id="67477383"/>
<dbReference type="jPOST" id="P49796"/>
<dbReference type="MassIVE" id="P49796"/>
<dbReference type="PaxDb" id="9606-ENSP00000363255"/>
<dbReference type="PeptideAtlas" id="P49796"/>
<dbReference type="ProteomicsDB" id="3705"/>
<dbReference type="ProteomicsDB" id="56123">
    <molecule id="P49796-3"/>
</dbReference>
<dbReference type="ProteomicsDB" id="56124">
    <molecule id="P49796-1"/>
</dbReference>
<dbReference type="ProteomicsDB" id="56125">
    <molecule id="P49796-2"/>
</dbReference>
<dbReference type="ProteomicsDB" id="56126">
    <molecule id="P49796-4"/>
</dbReference>
<dbReference type="ProteomicsDB" id="56127">
    <molecule id="P49796-5"/>
</dbReference>
<dbReference type="ProteomicsDB" id="56128">
    <molecule id="P49796-6"/>
</dbReference>
<dbReference type="ProteomicsDB" id="65662"/>
<dbReference type="Antibodypedia" id="15339">
    <property type="antibodies" value="169 antibodies from 29 providers"/>
</dbReference>
<dbReference type="DNASU" id="5998"/>
<dbReference type="Ensembl" id="ENST00000317613.10">
    <molecule id="P49796-5"/>
    <property type="protein sequence ID" value="ENSP00000312844.6"/>
    <property type="gene ID" value="ENSG00000138835.24"/>
</dbReference>
<dbReference type="Ensembl" id="ENST00000343817.9">
    <molecule id="P49796-4"/>
    <property type="protein sequence ID" value="ENSP00000340284.5"/>
    <property type="gene ID" value="ENSG00000138835.24"/>
</dbReference>
<dbReference type="Ensembl" id="ENST00000350696.9">
    <molecule id="P49796-3"/>
    <property type="protein sequence ID" value="ENSP00000259406.7"/>
    <property type="gene ID" value="ENSG00000138835.24"/>
</dbReference>
<dbReference type="Ensembl" id="ENST00000374134.7">
    <molecule id="P49796-1"/>
    <property type="protein sequence ID" value="ENSP00000363249.3"/>
    <property type="gene ID" value="ENSG00000138835.24"/>
</dbReference>
<dbReference type="Ensembl" id="ENST00000374140.6">
    <molecule id="P49796-3"/>
    <property type="protein sequence ID" value="ENSP00000363255.2"/>
    <property type="gene ID" value="ENSG00000138835.24"/>
</dbReference>
<dbReference type="Ensembl" id="ENST00000394646.7">
    <molecule id="P49796-9"/>
    <property type="protein sequence ID" value="ENSP00000378141.3"/>
    <property type="gene ID" value="ENSG00000138835.24"/>
</dbReference>
<dbReference type="Ensembl" id="ENST00000462143.5">
    <molecule id="P49796-1"/>
    <property type="protein sequence ID" value="ENSP00000420356.1"/>
    <property type="gene ID" value="ENSG00000138835.24"/>
</dbReference>
<dbReference type="GeneID" id="5998"/>
<dbReference type="KEGG" id="hsa:5998"/>
<dbReference type="UCSC" id="uc004bhq.5">
    <molecule id="P49796-3"/>
    <property type="organism name" value="human"/>
</dbReference>
<dbReference type="AGR" id="HGNC:9999"/>
<dbReference type="CTD" id="5998"/>
<dbReference type="DisGeNET" id="5998"/>
<dbReference type="GeneCards" id="RGS3"/>
<dbReference type="HGNC" id="HGNC:9999">
    <property type="gene designation" value="RGS3"/>
</dbReference>
<dbReference type="HPA" id="ENSG00000138835">
    <property type="expression patterns" value="Tissue enhanced (choroid)"/>
</dbReference>
<dbReference type="MIM" id="602189">
    <property type="type" value="gene"/>
</dbReference>
<dbReference type="neXtProt" id="NX_P49796"/>
<dbReference type="OpenTargets" id="ENSG00000138835"/>
<dbReference type="PharmGKB" id="PA34374"/>
<dbReference type="VEuPathDB" id="HostDB:ENSG00000138835"/>
<dbReference type="eggNOG" id="KOG3589">
    <property type="taxonomic scope" value="Eukaryota"/>
</dbReference>
<dbReference type="GeneTree" id="ENSGT00940000154416"/>
<dbReference type="HOGENOM" id="CLU_005574_0_0_1"/>
<dbReference type="InParanoid" id="P49796"/>
<dbReference type="OMA" id="CVDLAHE"/>
<dbReference type="OrthoDB" id="196547at2759"/>
<dbReference type="PAN-GO" id="P49796">
    <property type="GO annotations" value="3 GO annotations based on evolutionary models"/>
</dbReference>
<dbReference type="PhylomeDB" id="P49796"/>
<dbReference type="TreeFam" id="TF351952"/>
<dbReference type="PathwayCommons" id="P49796"/>
<dbReference type="Reactome" id="R-HSA-416476">
    <property type="pathway name" value="G alpha (q) signalling events"/>
</dbReference>
<dbReference type="Reactome" id="R-HSA-418594">
    <property type="pathway name" value="G alpha (i) signalling events"/>
</dbReference>
<dbReference type="SignaLink" id="P49796"/>
<dbReference type="BioGRID-ORCS" id="5998">
    <property type="hits" value="17 hits in 1146 CRISPR screens"/>
</dbReference>
<dbReference type="ChiTaRS" id="RGS3">
    <property type="organism name" value="human"/>
</dbReference>
<dbReference type="EvolutionaryTrace" id="P49796"/>
<dbReference type="GeneWiki" id="RGS3"/>
<dbReference type="GenomeRNAi" id="5998"/>
<dbReference type="Pharos" id="P49796">
    <property type="development level" value="Tbio"/>
</dbReference>
<dbReference type="PRO" id="PR:P49796"/>
<dbReference type="Proteomes" id="UP000005640">
    <property type="component" value="Chromosome 9"/>
</dbReference>
<dbReference type="RNAct" id="P49796">
    <property type="molecule type" value="protein"/>
</dbReference>
<dbReference type="Bgee" id="ENSG00000138835">
    <property type="expression patterns" value="Expressed in apex of heart and 194 other cell types or tissues"/>
</dbReference>
<dbReference type="ExpressionAtlas" id="P49796">
    <property type="expression patterns" value="baseline and differential"/>
</dbReference>
<dbReference type="GO" id="GO:0005829">
    <property type="term" value="C:cytosol"/>
    <property type="evidence" value="ECO:0000304"/>
    <property type="project" value="ProtInc"/>
</dbReference>
<dbReference type="GO" id="GO:0005634">
    <property type="term" value="C:nucleus"/>
    <property type="evidence" value="ECO:0000318"/>
    <property type="project" value="GO_Central"/>
</dbReference>
<dbReference type="GO" id="GO:0005886">
    <property type="term" value="C:plasma membrane"/>
    <property type="evidence" value="ECO:0000314"/>
    <property type="project" value="HPA"/>
</dbReference>
<dbReference type="GO" id="GO:0005096">
    <property type="term" value="F:GTPase activator activity"/>
    <property type="evidence" value="ECO:0000304"/>
    <property type="project" value="ProtInc"/>
</dbReference>
<dbReference type="GO" id="GO:0003924">
    <property type="term" value="F:GTPase activity"/>
    <property type="evidence" value="ECO:0000304"/>
    <property type="project" value="Reactome"/>
</dbReference>
<dbReference type="GO" id="GO:0007186">
    <property type="term" value="P:G protein-coupled receptor signaling pathway"/>
    <property type="evidence" value="ECO:0000304"/>
    <property type="project" value="Reactome"/>
</dbReference>
<dbReference type="GO" id="GO:0009968">
    <property type="term" value="P:negative regulation of signal transduction"/>
    <property type="evidence" value="ECO:0007669"/>
    <property type="project" value="UniProtKB-KW"/>
</dbReference>
<dbReference type="GO" id="GO:0008277">
    <property type="term" value="P:regulation of G protein-coupled receptor signaling pathway"/>
    <property type="evidence" value="ECO:0000304"/>
    <property type="project" value="ProtInc"/>
</dbReference>
<dbReference type="CDD" id="cd08685">
    <property type="entry name" value="C2_RGS-like"/>
    <property type="match status" value="1"/>
</dbReference>
<dbReference type="CDD" id="cd06711">
    <property type="entry name" value="PDZ_RGS3-like"/>
    <property type="match status" value="1"/>
</dbReference>
<dbReference type="CDD" id="cd08713">
    <property type="entry name" value="RGS_RGS3"/>
    <property type="match status" value="1"/>
</dbReference>
<dbReference type="FunFam" id="1.10.167.10:FF:000001">
    <property type="entry name" value="Putative regulator of g-protein signaling 12"/>
    <property type="match status" value="1"/>
</dbReference>
<dbReference type="FunFam" id="2.60.40.150:FF:000263">
    <property type="entry name" value="Regulator of G-protein signaling 3"/>
    <property type="match status" value="1"/>
</dbReference>
<dbReference type="FunFam" id="1.10.196.10:FF:000003">
    <property type="entry name" value="regulator of G-protein signaling 3 isoform X1"/>
    <property type="match status" value="1"/>
</dbReference>
<dbReference type="FunFam" id="2.30.29.30:FF:000285">
    <property type="entry name" value="regulator of G-protein signaling 3 isoform X1"/>
    <property type="match status" value="1"/>
</dbReference>
<dbReference type="FunFam" id="2.30.42.10:FF:000098">
    <property type="entry name" value="regulator of G-protein signaling 3 isoform X1"/>
    <property type="match status" value="1"/>
</dbReference>
<dbReference type="FunFam" id="1.10.196.10:FF:000001">
    <property type="entry name" value="Regulator of G-protein signaling 8"/>
    <property type="match status" value="1"/>
</dbReference>
<dbReference type="Gene3D" id="1.10.196.10">
    <property type="match status" value="2"/>
</dbReference>
<dbReference type="Gene3D" id="2.30.42.10">
    <property type="match status" value="1"/>
</dbReference>
<dbReference type="Gene3D" id="2.60.40.150">
    <property type="entry name" value="C2 domain"/>
    <property type="match status" value="1"/>
</dbReference>
<dbReference type="Gene3D" id="2.30.29.30">
    <property type="entry name" value="Pleckstrin-homology domain (PH domain)/Phosphotyrosine-binding domain (PTB)"/>
    <property type="match status" value="1"/>
</dbReference>
<dbReference type="Gene3D" id="1.10.167.10">
    <property type="entry name" value="Regulator of G-protein Signalling 4, domain 2"/>
    <property type="match status" value="1"/>
</dbReference>
<dbReference type="InterPro" id="IPR000008">
    <property type="entry name" value="C2_dom"/>
</dbReference>
<dbReference type="InterPro" id="IPR035892">
    <property type="entry name" value="C2_domain_sf"/>
</dbReference>
<dbReference type="InterPro" id="IPR001478">
    <property type="entry name" value="PDZ"/>
</dbReference>
<dbReference type="InterPro" id="IPR036034">
    <property type="entry name" value="PDZ_sf"/>
</dbReference>
<dbReference type="InterPro" id="IPR011993">
    <property type="entry name" value="PH-like_dom_sf"/>
</dbReference>
<dbReference type="InterPro" id="IPR016137">
    <property type="entry name" value="RGS"/>
</dbReference>
<dbReference type="InterPro" id="IPR034951">
    <property type="entry name" value="RGS_RGS3"/>
</dbReference>
<dbReference type="InterPro" id="IPR036305">
    <property type="entry name" value="RGS_sf"/>
</dbReference>
<dbReference type="InterPro" id="IPR024066">
    <property type="entry name" value="RGS_subdom1/3"/>
</dbReference>
<dbReference type="InterPro" id="IPR044926">
    <property type="entry name" value="RGS_subdomain_2"/>
</dbReference>
<dbReference type="PANTHER" id="PTHR46848">
    <property type="entry name" value="REGULATOR OF G-PROTEIN SIGNALING 3"/>
    <property type="match status" value="1"/>
</dbReference>
<dbReference type="PANTHER" id="PTHR46848:SF1">
    <property type="entry name" value="REGULATOR OF G-PROTEIN SIGNALING 3"/>
    <property type="match status" value="1"/>
</dbReference>
<dbReference type="Pfam" id="PF00168">
    <property type="entry name" value="C2"/>
    <property type="match status" value="1"/>
</dbReference>
<dbReference type="Pfam" id="PF00595">
    <property type="entry name" value="PDZ"/>
    <property type="match status" value="1"/>
</dbReference>
<dbReference type="Pfam" id="PF00615">
    <property type="entry name" value="RGS"/>
    <property type="match status" value="1"/>
</dbReference>
<dbReference type="PRINTS" id="PR01301">
    <property type="entry name" value="RGSPROTEIN"/>
</dbReference>
<dbReference type="SMART" id="SM00239">
    <property type="entry name" value="C2"/>
    <property type="match status" value="1"/>
</dbReference>
<dbReference type="SMART" id="SM00228">
    <property type="entry name" value="PDZ"/>
    <property type="match status" value="1"/>
</dbReference>
<dbReference type="SMART" id="SM00315">
    <property type="entry name" value="RGS"/>
    <property type="match status" value="1"/>
</dbReference>
<dbReference type="SUPFAM" id="SSF49562">
    <property type="entry name" value="C2 domain (Calcium/lipid-binding domain, CaLB)"/>
    <property type="match status" value="1"/>
</dbReference>
<dbReference type="SUPFAM" id="SSF50156">
    <property type="entry name" value="PDZ domain-like"/>
    <property type="match status" value="1"/>
</dbReference>
<dbReference type="SUPFAM" id="SSF50729">
    <property type="entry name" value="PH domain-like"/>
    <property type="match status" value="1"/>
</dbReference>
<dbReference type="SUPFAM" id="SSF48097">
    <property type="entry name" value="Regulator of G-protein signaling, RGS"/>
    <property type="match status" value="1"/>
</dbReference>
<dbReference type="PROSITE" id="PS50004">
    <property type="entry name" value="C2"/>
    <property type="match status" value="1"/>
</dbReference>
<dbReference type="PROSITE" id="PS50106">
    <property type="entry name" value="PDZ"/>
    <property type="match status" value="1"/>
</dbReference>
<dbReference type="PROSITE" id="PS50132">
    <property type="entry name" value="RGS"/>
    <property type="match status" value="1"/>
</dbReference>
<comment type="function">
    <text evidence="7 8 9 10">Down-regulates signaling from heterotrimeric G-proteins by increasing the GTPase activity of the alpha subunits, thereby driving them into their inactive GDP-bound form. Down-regulates G-protein-mediated release of inositol phosphates and activation of MAP kinases.</text>
</comment>
<comment type="subunit">
    <text evidence="1">Binds EFNB1 and EFNB2 (By similarity). Binds the GNB1-GNG2 heterodimer.</text>
</comment>
<comment type="interaction">
    <interactant intactId="EBI-2107809">
        <id>P49796</id>
    </interactant>
    <interactant intactId="EBI-717666">
        <id>Q96AP0</id>
        <label>ACD</label>
    </interactant>
    <organismsDiffer>false</organismsDiffer>
    <experiments>2</experiments>
</comment>
<comment type="interaction">
    <interactant intactId="EBI-2107809">
        <id>P49796</id>
    </interactant>
    <interactant intactId="EBI-740019">
        <id>O15162</id>
        <label>PLSCR1</label>
    </interactant>
    <organismsDiffer>false</organismsDiffer>
    <experiments>3</experiments>
</comment>
<comment type="interaction">
    <interactant intactId="EBI-12006708">
        <id>P49796-4</id>
    </interactant>
    <interactant intactId="EBI-3867333">
        <id>A8MQ03</id>
        <label>CYSRT1</label>
    </interactant>
    <organismsDiffer>false</organismsDiffer>
    <experiments>3</experiments>
</comment>
<comment type="interaction">
    <interactant intactId="EBI-10211517">
        <id>P49796-8</id>
    </interactant>
    <interactant intactId="EBI-739467">
        <id>Q9H8Y8</id>
        <label>GORASP2</label>
    </interactant>
    <organismsDiffer>false</organismsDiffer>
    <experiments>3</experiments>
</comment>
<comment type="subcellular location">
    <subcellularLocation>
        <location evidence="10">Cytoplasm</location>
    </subcellularLocation>
    <subcellularLocation>
        <location evidence="7">Nucleus</location>
    </subcellularLocation>
    <subcellularLocation>
        <location evidence="10">Cell membrane</location>
        <topology evidence="10">Peripheral membrane protein</topology>
    </subcellularLocation>
    <text>Long isoforms are cytoplasmic and associated with the plasma membrane (PubMed:9858594). Short isoforms are nuclear (PubMed:10749886).</text>
</comment>
<comment type="alternative products">
    <event type="alternative splicing"/>
    <isoform>
        <id>P49796-3</id>
        <name>3</name>
        <sequence type="displayed"/>
    </isoform>
    <isoform>
        <id>P49796-1</id>
        <name>1</name>
        <sequence type="described" ref="VSP_013958"/>
    </isoform>
    <isoform>
        <id>P49796-2</id>
        <name>2</name>
        <name>RGS3T</name>
        <sequence type="described" ref="VSP_005662"/>
    </isoform>
    <isoform>
        <id>P49796-4</id>
        <name>4</name>
        <name>1</name>
        <sequence type="described" ref="VSP_013959 VSP_013963"/>
    </isoform>
    <isoform>
        <id>P49796-5</id>
        <name>5</name>
        <sequence type="described" ref="VSP_013961 VSP_013962 VSP_013964 VSP_013965"/>
    </isoform>
    <isoform>
        <id>P49796-6</id>
        <name>6</name>
        <name>C2PA-RGS3</name>
        <sequence type="described" ref="VSP_013960"/>
    </isoform>
    <isoform>
        <id>P49796-7</id>
        <name>7</name>
        <sequence type="described" ref="VSP_047029"/>
    </isoform>
    <isoform>
        <id>P49796-8</id>
        <name>8</name>
        <name>RGS3S</name>
        <sequence type="described" ref="VSP_047029 VSP_053533"/>
    </isoform>
    <isoform>
        <id>P49796-9</id>
        <name>9</name>
        <sequence type="described" ref="VSP_013959 VSP_013963 VSP_054690"/>
    </isoform>
</comment>
<comment type="PTM">
    <text evidence="1">Phosphorylated by cyclic GMP-dependent protein kinase.</text>
</comment>
<comment type="PTM">
    <text evidence="17">ISGylated.</text>
</comment>
<comment type="miscellaneous">
    <molecule>Isoform 2</molecule>
    <text evidence="7">Nuclear.</text>
</comment>
<evidence type="ECO:0000250" key="1"/>
<evidence type="ECO:0000250" key="2">
    <source>
        <dbReference type="UniProtKB" id="Q9DC04"/>
    </source>
</evidence>
<evidence type="ECO:0000255" key="3">
    <source>
        <dbReference type="PROSITE-ProRule" id="PRU00041"/>
    </source>
</evidence>
<evidence type="ECO:0000255" key="4">
    <source>
        <dbReference type="PROSITE-ProRule" id="PRU00143"/>
    </source>
</evidence>
<evidence type="ECO:0000255" key="5">
    <source>
        <dbReference type="PROSITE-ProRule" id="PRU00171"/>
    </source>
</evidence>
<evidence type="ECO:0000256" key="6">
    <source>
        <dbReference type="SAM" id="MobiDB-lite"/>
    </source>
</evidence>
<evidence type="ECO:0000269" key="7">
    <source>
    </source>
</evidence>
<evidence type="ECO:0000269" key="8">
    <source>
    </source>
</evidence>
<evidence type="ECO:0000269" key="9">
    <source>
    </source>
</evidence>
<evidence type="ECO:0000269" key="10">
    <source>
    </source>
</evidence>
<evidence type="ECO:0000303" key="11">
    <source>
    </source>
</evidence>
<evidence type="ECO:0000303" key="12">
    <source>
    </source>
</evidence>
<evidence type="ECO:0000303" key="13">
    <source>
    </source>
</evidence>
<evidence type="ECO:0000303" key="14">
    <source>
    </source>
</evidence>
<evidence type="ECO:0000303" key="15">
    <source ref="5"/>
</evidence>
<evidence type="ECO:0000305" key="16"/>
<evidence type="ECO:0000305" key="17">
    <source>
    </source>
</evidence>
<evidence type="ECO:0007744" key="18">
    <source>
    </source>
</evidence>
<evidence type="ECO:0007744" key="19">
    <source>
    </source>
</evidence>
<evidence type="ECO:0007829" key="20">
    <source>
        <dbReference type="PDB" id="2F5Y"/>
    </source>
</evidence>
<evidence type="ECO:0007829" key="21">
    <source>
        <dbReference type="PDB" id="2OJ4"/>
    </source>
</evidence>
<evidence type="ECO:0007829" key="22">
    <source>
        <dbReference type="PDB" id="3FBK"/>
    </source>
</evidence>
<feature type="chain" id="PRO_0000204182" description="Regulator of G-protein signaling 3">
    <location>
        <begin position="1"/>
        <end position="1198"/>
    </location>
</feature>
<feature type="domain" description="C2" evidence="3">
    <location>
        <begin position="137"/>
        <end position="256"/>
    </location>
</feature>
<feature type="domain" description="PDZ" evidence="4">
    <location>
        <begin position="299"/>
        <end position="376"/>
    </location>
</feature>
<feature type="domain" description="RGS" evidence="5">
    <location>
        <begin position="1073"/>
        <end position="1198"/>
    </location>
</feature>
<feature type="region of interest" description="Disordered" evidence="6">
    <location>
        <begin position="669"/>
        <end position="933"/>
    </location>
</feature>
<feature type="region of interest" description="Disordered" evidence="6">
    <location>
        <begin position="1007"/>
        <end position="1026"/>
    </location>
</feature>
<feature type="region of interest" description="Disordered" evidence="6">
    <location>
        <begin position="1032"/>
        <end position="1056"/>
    </location>
</feature>
<feature type="compositionally biased region" description="Basic and acidic residues" evidence="6">
    <location>
        <begin position="679"/>
        <end position="697"/>
    </location>
</feature>
<feature type="compositionally biased region" description="Polar residues" evidence="6">
    <location>
        <begin position="739"/>
        <end position="751"/>
    </location>
</feature>
<feature type="compositionally biased region" description="Pro residues" evidence="6">
    <location>
        <begin position="753"/>
        <end position="773"/>
    </location>
</feature>
<feature type="compositionally biased region" description="Acidic residues" evidence="6">
    <location>
        <begin position="877"/>
        <end position="906"/>
    </location>
</feature>
<feature type="compositionally biased region" description="Basic and acidic residues" evidence="6">
    <location>
        <begin position="907"/>
        <end position="917"/>
    </location>
</feature>
<feature type="modified residue" description="Omega-N-methylarginine" evidence="19">
    <location>
        <position position="448"/>
    </location>
</feature>
<feature type="modified residue" description="Phosphoserine" evidence="18">
    <location>
        <position position="674"/>
    </location>
</feature>
<feature type="modified residue" description="Phosphoserine" evidence="18">
    <location>
        <position position="943"/>
    </location>
</feature>
<feature type="modified residue" description="Phosphoserine" evidence="2">
    <location>
        <position position="946"/>
    </location>
</feature>
<feature type="modified residue" description="Phosphoserine" evidence="2">
    <location>
        <position position="978"/>
    </location>
</feature>
<feature type="modified residue" description="Phosphoserine" evidence="2">
    <location>
        <position position="1007"/>
    </location>
</feature>
<feature type="splice variant" id="VSP_047029" description="In isoform 7 and isoform 8." evidence="11">
    <original>MPVIPALWEVEMGRSQGQEIETILANRSHSDSTPLPNFLSGSHRPECCTCRLLTASGAQDSLPFGRRLYSGPWRSCEEVCHVSVLSVLSTSCGLSLSLPIFPGWMEWLSPDIALPRRDEWTQTSPARKRITHAKVQGAGQLRLSIDAQDRVLLLHIIEGKGLISKQPGTCDPYVKISLIPEDSRLRHQKTQTVPDCRDPAFHEHFFFPVQEEDDQKRLLVTVWNRASQSRQSGLIGCMSFGVKSLLTPDKEISGWYYLLGEHLGRTKHLKVARRRLRPLRDPLLRMPGGGDTENGKKLKITIPRGKDGFGFTICCDSPVRVQAVDSGGPAERAGLQQLDTVLQLNERPVEHWKCVELAHEIRSCPSEIILLVWRMVPQVKPGPDGGVLRRASCKSTHDLQSPPNKREKNCTHGVQARPEQRHSCHLVCDSSDGLLLGGWERYTEVAKRGGQHTLPALSRATAPTDPNYIILAPLNPGSQLLRPVYQEDTIPEESGSPSKGKSYTGLGKKSRLMKTVQTMKGHGNYQNCPVVRPHATHSSYGTYVTLAPKVLVFPVFVQPLDLCNPARTLLLSEELLLYEGRNKAAEVTLFAYSDLLLFTKEDEPGRCDVLRNPLYLQSVKLQEGSSEDLKFCVLYLAEKAECLFTLEAHSQEQKKRVCWCLSENIAKQQQLAASPPDSKMFETEADEKREMALEEGKGPGAEDSPPSKEPSPGQELPPGQDLPPNKDSPSGQEPAPSQEPLSSKDSATSEGSPPGPDAPPSKDVPPCQEPPPAQDLSPCQDLPAGQEPLPHQDPLLTKDLPAIQESPTRDLPPCQDLPPSQVSLPAKALTEDTMSSGDLLAATGDPPAAPRPAFVIPEVRLDSTYSQKAGAEQGCSGDEEDAEEAEEVEEGEEGEEDEDEDTSDDNYGERSEAKRSSMIETGQGAEGGLSLRVQNSLRRRTHSEGSLLQEPRGPCFASDTTLHCSDGEGAASTWGMPSPSTLKKELGRNGGSMHHLSLFFTGHRKMSGADTVGDDDEASRKRKSKNL</original>
    <variation>MVTRRPVTNSWDWLPAGAAPEAVPCRHMPLSRLPLRVGQKEFFFPLPLLVPPISWLLLSESQPRLVPGSPVIRPGFQRACVAAACTVAARCPGRGVGDRSQSGASYRPICGPKVGGPTEMLRGMYLTRNGNLQRRHTMKE</variation>
    <location>
        <begin position="1"/>
        <end position="1027"/>
    </location>
</feature>
<feature type="splice variant" id="VSP_005662" description="In isoform 2." evidence="15">
    <location>
        <begin position="1"/>
        <end position="992"/>
    </location>
</feature>
<feature type="splice variant" id="VSP_013958" description="In isoform 1." evidence="11 12 14 15">
    <location>
        <begin position="1"/>
        <end position="679"/>
    </location>
</feature>
<feature type="splice variant" id="VSP_013959" description="In isoform 4 and isoform 9." evidence="11 12 13 14 15">
    <location>
        <begin position="1"/>
        <end position="281"/>
    </location>
</feature>
<feature type="splice variant" id="VSP_013961" description="In isoform 5." evidence="12">
    <location>
        <begin position="1"/>
        <end position="112"/>
    </location>
</feature>
<feature type="splice variant" id="VSP_013960" description="In isoform 6." evidence="11">
    <location>
        <begin position="1"/>
        <end position="104"/>
    </location>
</feature>
<feature type="splice variant" id="VSP_013962" description="In isoform 5." evidence="12">
    <original>ALPRRDEWTQTSPARKRITHAKVQGA</original>
    <variation>MERSLHRVSLGSRRAHPDLSFYLTTF</variation>
    <location>
        <begin position="113"/>
        <end position="138"/>
    </location>
</feature>
<feature type="splice variant" id="VSP_013963" description="In isoform 4 and isoform 9." evidence="11 12 13 14 15">
    <original>PLLRMPGGGDTENGKKLK</original>
    <variation>MNRFNGLCKVCSERRYRQ</variation>
    <location>
        <begin position="282"/>
        <end position="299"/>
    </location>
</feature>
<feature type="splice variant" id="VSP_054690" description="In isoform 9." evidence="12">
    <location>
        <begin position="679"/>
        <end position="1004"/>
    </location>
</feature>
<feature type="splice variant" id="VSP_013964" description="In isoform 5." evidence="12">
    <original>MFETEADEKREMALEEGKGPGAEDSPPSKEPSPGQ</original>
    <variation>KLHPFGSLQQEMGPVNSTNATQDRSFTSPGQTLIG</variation>
    <location>
        <begin position="680"/>
        <end position="714"/>
    </location>
</feature>
<feature type="splice variant" id="VSP_013965" description="In isoform 5." evidence="12">
    <location>
        <begin position="715"/>
        <end position="1198"/>
    </location>
</feature>
<feature type="splice variant" id="VSP_053533" description="In isoform 8." evidence="11">
    <original>L</original>
    <variation>LDYKDDDDK</variation>
    <location>
        <position position="1198"/>
    </location>
</feature>
<feature type="sequence variant" id="VAR_051794" description="In dbSNP:rs16933949.">
    <original>R</original>
    <variation>K</variation>
    <location>
        <position position="129"/>
    </location>
</feature>
<feature type="sequence variant" id="VAR_061769" description="In dbSNP:rs41305473.">
    <original>R</original>
    <variation>Q</variation>
    <location>
        <position position="809"/>
    </location>
</feature>
<feature type="sequence conflict" description="In Ref. 2; AAM33254." evidence="16" ref="2">
    <original>C</original>
    <variation>W</variation>
    <location>
        <position position="170"/>
    </location>
</feature>
<feature type="sequence conflict" description="In Ref. 3; BAC11328." evidence="16" ref="3">
    <original>F</original>
    <variation>S</variation>
    <location>
        <position position="206"/>
    </location>
</feature>
<feature type="sequence conflict" description="In Ref. 2; AAM33254." evidence="16" ref="2">
    <original>T</original>
    <variation>A</variation>
    <location>
        <position position="266"/>
    </location>
</feature>
<feature type="sequence conflict" description="In Ref. 4; AAL68829." evidence="16" ref="4">
    <original>A</original>
    <variation>V</variation>
    <location>
        <position position="462"/>
    </location>
</feature>
<feature type="sequence conflict" description="In Ref. 2; AAM33255." evidence="16" ref="2">
    <original>A</original>
    <variation>V</variation>
    <location>
        <position position="585"/>
    </location>
</feature>
<feature type="sequence conflict" description="In Ref. 3; BAC11328." evidence="16" ref="3">
    <original>C</original>
    <variation>R</variation>
    <location>
        <position position="632"/>
    </location>
</feature>
<feature type="sequence conflict" description="In Ref. 2; AAM33254." evidence="16" ref="2">
    <location>
        <position position="705"/>
    </location>
</feature>
<feature type="sequence conflict" description="In Ref. 8; AAH42555." evidence="16" ref="8">
    <original>N</original>
    <variation>S</variation>
    <location>
        <position position="725"/>
    </location>
</feature>
<feature type="sequence conflict" description="In Ref. 2; AAM33254." evidence="16" ref="2">
    <original>Q</original>
    <variation>H</variation>
    <location>
        <position position="873"/>
    </location>
</feature>
<feature type="sequence conflict" description="In Ref. 2; AAM33254." evidence="16" ref="2">
    <original>EE</original>
    <variation>KQ</variation>
    <location>
        <begin position="883"/>
        <end position="884"/>
    </location>
</feature>
<feature type="sequence conflict" description="In Ref. 5; AAM12641." evidence="16" ref="5">
    <original>K</original>
    <variation>R</variation>
    <location>
        <position position="984"/>
    </location>
</feature>
<feature type="sequence conflict" description="In Ref. 2; AAM33253." evidence="16" ref="2">
    <original>A</original>
    <variation>V</variation>
    <location>
        <position position="1127"/>
    </location>
</feature>
<feature type="strand" evidence="22">
    <location>
        <begin position="140"/>
        <end position="161"/>
    </location>
</feature>
<feature type="strand" evidence="22">
    <location>
        <begin position="166"/>
        <end position="168"/>
    </location>
</feature>
<feature type="strand" evidence="22">
    <location>
        <begin position="172"/>
        <end position="180"/>
    </location>
</feature>
<feature type="strand" evidence="22">
    <location>
        <begin position="200"/>
        <end position="208"/>
    </location>
</feature>
<feature type="helix" evidence="22">
    <location>
        <begin position="211"/>
        <end position="213"/>
    </location>
</feature>
<feature type="strand" evidence="22">
    <location>
        <begin position="216"/>
        <end position="224"/>
    </location>
</feature>
<feature type="helix" evidence="22">
    <location>
        <begin position="229"/>
        <end position="231"/>
    </location>
</feature>
<feature type="strand" evidence="22">
    <location>
        <begin position="233"/>
        <end position="241"/>
    </location>
</feature>
<feature type="helix" evidence="22">
    <location>
        <begin position="242"/>
        <end position="245"/>
    </location>
</feature>
<feature type="strand" evidence="22">
    <location>
        <begin position="252"/>
        <end position="257"/>
    </location>
</feature>
<feature type="helix" evidence="22">
    <location>
        <begin position="263"/>
        <end position="265"/>
    </location>
</feature>
<feature type="strand" evidence="20">
    <location>
        <begin position="299"/>
        <end position="303"/>
    </location>
</feature>
<feature type="strand" evidence="20">
    <location>
        <begin position="310"/>
        <end position="314"/>
    </location>
</feature>
<feature type="strand" evidence="20">
    <location>
        <begin position="316"/>
        <end position="318"/>
    </location>
</feature>
<feature type="strand" evidence="20">
    <location>
        <begin position="320"/>
        <end position="324"/>
    </location>
</feature>
<feature type="helix" evidence="20">
    <location>
        <begin position="329"/>
        <end position="333"/>
    </location>
</feature>
<feature type="strand" evidence="20">
    <location>
        <begin position="340"/>
        <end position="344"/>
    </location>
</feature>
<feature type="helix" evidence="20">
    <location>
        <begin position="354"/>
        <end position="362"/>
    </location>
</feature>
<feature type="strand" evidence="20">
    <location>
        <begin position="365"/>
        <end position="374"/>
    </location>
</feature>
<feature type="helix" evidence="21">
    <location>
        <begin position="1066"/>
        <end position="1070"/>
    </location>
</feature>
<feature type="helix" evidence="21">
    <location>
        <begin position="1074"/>
        <end position="1078"/>
    </location>
</feature>
<feature type="helix" evidence="21">
    <location>
        <begin position="1081"/>
        <end position="1093"/>
    </location>
</feature>
<feature type="helix" evidence="21">
    <location>
        <begin position="1097"/>
        <end position="1109"/>
    </location>
</feature>
<feature type="helix" evidence="21">
    <location>
        <begin position="1115"/>
        <end position="1129"/>
    </location>
</feature>
<feature type="helix" evidence="21">
    <location>
        <begin position="1142"/>
        <end position="1150"/>
    </location>
</feature>
<feature type="turn" evidence="21">
    <location>
        <begin position="1157"/>
        <end position="1160"/>
    </location>
</feature>
<feature type="helix" evidence="21">
    <location>
        <begin position="1161"/>
        <end position="1173"/>
    </location>
</feature>
<feature type="helix" evidence="21">
    <location>
        <begin position="1175"/>
        <end position="1181"/>
    </location>
</feature>
<feature type="helix" evidence="21">
    <location>
        <begin position="1183"/>
        <end position="1186"/>
    </location>
</feature>
<feature type="turn" evidence="21">
    <location>
        <begin position="1187"/>
        <end position="1189"/>
    </location>
</feature>
<keyword id="KW-0002">3D-structure</keyword>
<keyword id="KW-0025">Alternative splicing</keyword>
<keyword id="KW-1003">Cell membrane</keyword>
<keyword id="KW-0963">Cytoplasm</keyword>
<keyword id="KW-0472">Membrane</keyword>
<keyword id="KW-0488">Methylation</keyword>
<keyword id="KW-0539">Nucleus</keyword>
<keyword id="KW-0597">Phosphoprotein</keyword>
<keyword id="KW-1267">Proteomics identification</keyword>
<keyword id="KW-1185">Reference proteome</keyword>
<keyword id="KW-0734">Signal transduction inhibitor</keyword>
<keyword id="KW-0832">Ubl conjugation</keyword>
<reference key="1">
    <citation type="journal article" date="1996" name="Nature">
        <title>Inhibition of G-protein-mediated MAP kinase activation by a new mammalian gene family.</title>
        <authorList>
            <person name="Druey K.M."/>
            <person name="Blumer K.J."/>
            <person name="Kang V.H."/>
            <person name="Kehrl J.H."/>
        </authorList>
    </citation>
    <scope>NUCLEOTIDE SEQUENCE [MRNA] (ISOFORM 1)</scope>
    <scope>FUNCTION</scope>
</reference>
<reference key="2">
    <citation type="journal article" date="2002" name="Genomics">
        <title>Additional 5' exons in the RGS3 locus generate multiple mRNA transcripts, one of which accounts for the origin of human PDZ-RGS3.</title>
        <authorList>
            <person name="Kehrl J.H."/>
            <person name="Srikumar D."/>
            <person name="Harrison K."/>
            <person name="Wilson G.L."/>
            <person name="Shi C.S."/>
        </authorList>
    </citation>
    <scope>NUCLEOTIDE SEQUENCE [MRNA] (ISOFORMS 4; 6 AND 8)</scope>
    <scope>NUCLEOTIDE SEQUENCE [MRNA] OF 105-1198 (ISOFORM 1)</scope>
</reference>
<reference key="3">
    <citation type="journal article" date="2004" name="Nat. Genet.">
        <title>Complete sequencing and characterization of 21,243 full-length human cDNAs.</title>
        <authorList>
            <person name="Ota T."/>
            <person name="Suzuki Y."/>
            <person name="Nishikawa T."/>
            <person name="Otsuki T."/>
            <person name="Sugiyama T."/>
            <person name="Irie R."/>
            <person name="Wakamatsu A."/>
            <person name="Hayashi K."/>
            <person name="Sato H."/>
            <person name="Nagai K."/>
            <person name="Kimura K."/>
            <person name="Makita H."/>
            <person name="Sekine M."/>
            <person name="Obayashi M."/>
            <person name="Nishi T."/>
            <person name="Shibahara T."/>
            <person name="Tanaka T."/>
            <person name="Ishii S."/>
            <person name="Yamamoto J."/>
            <person name="Saito K."/>
            <person name="Kawai Y."/>
            <person name="Isono Y."/>
            <person name="Nakamura Y."/>
            <person name="Nagahari K."/>
            <person name="Murakami K."/>
            <person name="Yasuda T."/>
            <person name="Iwayanagi T."/>
            <person name="Wagatsuma M."/>
            <person name="Shiratori A."/>
            <person name="Sudo H."/>
            <person name="Hosoiri T."/>
            <person name="Kaku Y."/>
            <person name="Kodaira H."/>
            <person name="Kondo H."/>
            <person name="Sugawara M."/>
            <person name="Takahashi M."/>
            <person name="Kanda K."/>
            <person name="Yokoi T."/>
            <person name="Furuya T."/>
            <person name="Kikkawa E."/>
            <person name="Omura Y."/>
            <person name="Abe K."/>
            <person name="Kamihara K."/>
            <person name="Katsuta N."/>
            <person name="Sato K."/>
            <person name="Tanikawa M."/>
            <person name="Yamazaki M."/>
            <person name="Ninomiya K."/>
            <person name="Ishibashi T."/>
            <person name="Yamashita H."/>
            <person name="Murakawa K."/>
            <person name="Fujimori K."/>
            <person name="Tanai H."/>
            <person name="Kimata M."/>
            <person name="Watanabe M."/>
            <person name="Hiraoka S."/>
            <person name="Chiba Y."/>
            <person name="Ishida S."/>
            <person name="Ono Y."/>
            <person name="Takiguchi S."/>
            <person name="Watanabe S."/>
            <person name="Yosida M."/>
            <person name="Hotuta T."/>
            <person name="Kusano J."/>
            <person name="Kanehori K."/>
            <person name="Takahashi-Fujii A."/>
            <person name="Hara H."/>
            <person name="Tanase T.-O."/>
            <person name="Nomura Y."/>
            <person name="Togiya S."/>
            <person name="Komai F."/>
            <person name="Hara R."/>
            <person name="Takeuchi K."/>
            <person name="Arita M."/>
            <person name="Imose N."/>
            <person name="Musashino K."/>
            <person name="Yuuki H."/>
            <person name="Oshima A."/>
            <person name="Sasaki N."/>
            <person name="Aotsuka S."/>
            <person name="Yoshikawa Y."/>
            <person name="Matsunawa H."/>
            <person name="Ichihara T."/>
            <person name="Shiohata N."/>
            <person name="Sano S."/>
            <person name="Moriya S."/>
            <person name="Momiyama H."/>
            <person name="Satoh N."/>
            <person name="Takami S."/>
            <person name="Terashima Y."/>
            <person name="Suzuki O."/>
            <person name="Nakagawa S."/>
            <person name="Senoh A."/>
            <person name="Mizoguchi H."/>
            <person name="Goto Y."/>
            <person name="Shimizu F."/>
            <person name="Wakebe H."/>
            <person name="Hishigaki H."/>
            <person name="Watanabe T."/>
            <person name="Sugiyama A."/>
            <person name="Takemoto M."/>
            <person name="Kawakami B."/>
            <person name="Yamazaki M."/>
            <person name="Watanabe K."/>
            <person name="Kumagai A."/>
            <person name="Itakura S."/>
            <person name="Fukuzumi Y."/>
            <person name="Fujimori Y."/>
            <person name="Komiyama M."/>
            <person name="Tashiro H."/>
            <person name="Tanigami A."/>
            <person name="Fujiwara T."/>
            <person name="Ono T."/>
            <person name="Yamada K."/>
            <person name="Fujii Y."/>
            <person name="Ozaki K."/>
            <person name="Hirao M."/>
            <person name="Ohmori Y."/>
            <person name="Kawabata A."/>
            <person name="Hikiji T."/>
            <person name="Kobatake N."/>
            <person name="Inagaki H."/>
            <person name="Ikema Y."/>
            <person name="Okamoto S."/>
            <person name="Okitani R."/>
            <person name="Kawakami T."/>
            <person name="Noguchi S."/>
            <person name="Itoh T."/>
            <person name="Shigeta K."/>
            <person name="Senba T."/>
            <person name="Matsumura K."/>
            <person name="Nakajima Y."/>
            <person name="Mizuno T."/>
            <person name="Morinaga M."/>
            <person name="Sasaki M."/>
            <person name="Togashi T."/>
            <person name="Oyama M."/>
            <person name="Hata H."/>
            <person name="Watanabe M."/>
            <person name="Komatsu T."/>
            <person name="Mizushima-Sugano J."/>
            <person name="Satoh T."/>
            <person name="Shirai Y."/>
            <person name="Takahashi Y."/>
            <person name="Nakagawa K."/>
            <person name="Okumura K."/>
            <person name="Nagase T."/>
            <person name="Nomura N."/>
            <person name="Kikuchi H."/>
            <person name="Masuho Y."/>
            <person name="Yamashita R."/>
            <person name="Nakai K."/>
            <person name="Yada T."/>
            <person name="Nakamura Y."/>
            <person name="Ohara O."/>
            <person name="Isogai T."/>
            <person name="Sugano S."/>
        </authorList>
    </citation>
    <scope>NUCLEOTIDE SEQUENCE [LARGE SCALE MRNA] (ISOFORMS 1; 3; 5 AND 9)</scope>
    <source>
        <tissue>Amygdala</tissue>
        <tissue>Testis</tissue>
    </source>
</reference>
<reference key="4">
    <citation type="submission" date="2001-12" db="EMBL/GenBank/DDBJ databases">
        <title>Human PDZ-RGS3.</title>
        <authorList>
            <person name="Chatterjee T.K."/>
            <person name="Fisher R.A."/>
        </authorList>
    </citation>
    <scope>NUCLEOTIDE SEQUENCE [GENOMIC DNA] (ISOFORM 4)</scope>
</reference>
<reference key="5">
    <citation type="submission" date="2004-03" db="EMBL/GenBank/DDBJ databases">
        <title>cDNA clones of human proteins involved in signal transduction sequenced by the Guthrie cDNA resource center (www.cdna.org).</title>
        <authorList>
            <person name="Puhl H.L. III"/>
            <person name="Ikeda S.R."/>
            <person name="Aronstam R.S."/>
        </authorList>
    </citation>
    <scope>NUCLEOTIDE SEQUENCE [LARGE SCALE MRNA] (ISOFORMS 1 AND 2)</scope>
    <source>
        <tissue>Brain</tissue>
    </source>
</reference>
<reference key="6">
    <citation type="journal article" date="2004" name="Nature">
        <title>DNA sequence and analysis of human chromosome 9.</title>
        <authorList>
            <person name="Humphray S.J."/>
            <person name="Oliver K."/>
            <person name="Hunt A.R."/>
            <person name="Plumb R.W."/>
            <person name="Loveland J.E."/>
            <person name="Howe K.L."/>
            <person name="Andrews T.D."/>
            <person name="Searle S."/>
            <person name="Hunt S.E."/>
            <person name="Scott C.E."/>
            <person name="Jones M.C."/>
            <person name="Ainscough R."/>
            <person name="Almeida J.P."/>
            <person name="Ambrose K.D."/>
            <person name="Ashwell R.I.S."/>
            <person name="Babbage A.K."/>
            <person name="Babbage S."/>
            <person name="Bagguley C.L."/>
            <person name="Bailey J."/>
            <person name="Banerjee R."/>
            <person name="Barker D.J."/>
            <person name="Barlow K.F."/>
            <person name="Bates K."/>
            <person name="Beasley H."/>
            <person name="Beasley O."/>
            <person name="Bird C.P."/>
            <person name="Bray-Allen S."/>
            <person name="Brown A.J."/>
            <person name="Brown J.Y."/>
            <person name="Burford D."/>
            <person name="Burrill W."/>
            <person name="Burton J."/>
            <person name="Carder C."/>
            <person name="Carter N.P."/>
            <person name="Chapman J.C."/>
            <person name="Chen Y."/>
            <person name="Clarke G."/>
            <person name="Clark S.Y."/>
            <person name="Clee C.M."/>
            <person name="Clegg S."/>
            <person name="Collier R.E."/>
            <person name="Corby N."/>
            <person name="Crosier M."/>
            <person name="Cummings A.T."/>
            <person name="Davies J."/>
            <person name="Dhami P."/>
            <person name="Dunn M."/>
            <person name="Dutta I."/>
            <person name="Dyer L.W."/>
            <person name="Earthrowl M.E."/>
            <person name="Faulkner L."/>
            <person name="Fleming C.J."/>
            <person name="Frankish A."/>
            <person name="Frankland J.A."/>
            <person name="French L."/>
            <person name="Fricker D.G."/>
            <person name="Garner P."/>
            <person name="Garnett J."/>
            <person name="Ghori J."/>
            <person name="Gilbert J.G.R."/>
            <person name="Glison C."/>
            <person name="Grafham D.V."/>
            <person name="Gribble S."/>
            <person name="Griffiths C."/>
            <person name="Griffiths-Jones S."/>
            <person name="Grocock R."/>
            <person name="Guy J."/>
            <person name="Hall R.E."/>
            <person name="Hammond S."/>
            <person name="Harley J.L."/>
            <person name="Harrison E.S.I."/>
            <person name="Hart E.A."/>
            <person name="Heath P.D."/>
            <person name="Henderson C.D."/>
            <person name="Hopkins B.L."/>
            <person name="Howard P.J."/>
            <person name="Howden P.J."/>
            <person name="Huckle E."/>
            <person name="Johnson C."/>
            <person name="Johnson D."/>
            <person name="Joy A.A."/>
            <person name="Kay M."/>
            <person name="Keenan S."/>
            <person name="Kershaw J.K."/>
            <person name="Kimberley A.M."/>
            <person name="King A."/>
            <person name="Knights A."/>
            <person name="Laird G.K."/>
            <person name="Langford C."/>
            <person name="Lawlor S."/>
            <person name="Leongamornlert D.A."/>
            <person name="Leversha M."/>
            <person name="Lloyd C."/>
            <person name="Lloyd D.M."/>
            <person name="Lovell J."/>
            <person name="Martin S."/>
            <person name="Mashreghi-Mohammadi M."/>
            <person name="Matthews L."/>
            <person name="McLaren S."/>
            <person name="McLay K.E."/>
            <person name="McMurray A."/>
            <person name="Milne S."/>
            <person name="Nickerson T."/>
            <person name="Nisbett J."/>
            <person name="Nordsiek G."/>
            <person name="Pearce A.V."/>
            <person name="Peck A.I."/>
            <person name="Porter K.M."/>
            <person name="Pandian R."/>
            <person name="Pelan S."/>
            <person name="Phillimore B."/>
            <person name="Povey S."/>
            <person name="Ramsey Y."/>
            <person name="Rand V."/>
            <person name="Scharfe M."/>
            <person name="Sehra H.K."/>
            <person name="Shownkeen R."/>
            <person name="Sims S.K."/>
            <person name="Skuce C.D."/>
            <person name="Smith M."/>
            <person name="Steward C.A."/>
            <person name="Swarbreck D."/>
            <person name="Sycamore N."/>
            <person name="Tester J."/>
            <person name="Thorpe A."/>
            <person name="Tracey A."/>
            <person name="Tromans A."/>
            <person name="Thomas D.W."/>
            <person name="Wall M."/>
            <person name="Wallis J.M."/>
            <person name="West A.P."/>
            <person name="Whitehead S.L."/>
            <person name="Willey D.L."/>
            <person name="Williams S.A."/>
            <person name="Wilming L."/>
            <person name="Wray P.W."/>
            <person name="Young L."/>
            <person name="Ashurst J.L."/>
            <person name="Coulson A."/>
            <person name="Blocker H."/>
            <person name="Durbin R.M."/>
            <person name="Sulston J.E."/>
            <person name="Hubbard T."/>
            <person name="Jackson M.J."/>
            <person name="Bentley D.R."/>
            <person name="Beck S."/>
            <person name="Rogers J."/>
            <person name="Dunham I."/>
        </authorList>
    </citation>
    <scope>NUCLEOTIDE SEQUENCE [LARGE SCALE GENOMIC DNA]</scope>
</reference>
<reference key="7">
    <citation type="submission" date="2005-07" db="EMBL/GenBank/DDBJ databases">
        <authorList>
            <person name="Mural R.J."/>
            <person name="Istrail S."/>
            <person name="Sutton G.G."/>
            <person name="Florea L."/>
            <person name="Halpern A.L."/>
            <person name="Mobarry C.M."/>
            <person name="Lippert R."/>
            <person name="Walenz B."/>
            <person name="Shatkay H."/>
            <person name="Dew I."/>
            <person name="Miller J.R."/>
            <person name="Flanigan M.J."/>
            <person name="Edwards N.J."/>
            <person name="Bolanos R."/>
            <person name="Fasulo D."/>
            <person name="Halldorsson B.V."/>
            <person name="Hannenhalli S."/>
            <person name="Turner R."/>
            <person name="Yooseph S."/>
            <person name="Lu F."/>
            <person name="Nusskern D.R."/>
            <person name="Shue B.C."/>
            <person name="Zheng X.H."/>
            <person name="Zhong F."/>
            <person name="Delcher A.L."/>
            <person name="Huson D.H."/>
            <person name="Kravitz S.A."/>
            <person name="Mouchard L."/>
            <person name="Reinert K."/>
            <person name="Remington K.A."/>
            <person name="Clark A.G."/>
            <person name="Waterman M.S."/>
            <person name="Eichler E.E."/>
            <person name="Adams M.D."/>
            <person name="Hunkapiller M.W."/>
            <person name="Myers E.W."/>
            <person name="Venter J.C."/>
        </authorList>
    </citation>
    <scope>NUCLEOTIDE SEQUENCE [LARGE SCALE GENOMIC DNA]</scope>
</reference>
<reference key="8">
    <citation type="journal article" date="2004" name="Genome Res.">
        <title>The status, quality, and expansion of the NIH full-length cDNA project: the Mammalian Gene Collection (MGC).</title>
        <authorList>
            <consortium name="The MGC Project Team"/>
        </authorList>
    </citation>
    <scope>NUCLEOTIDE SEQUENCE [LARGE SCALE MRNA] (ISOFORM 4)</scope>
    <scope>PARTIAL NUCLEOTIDE SEQUENCE [LARGE SCALE MRNA] (ISOFORM 7)</scope>
    <source>
        <tissue>Brain</tissue>
        <tissue>Kidney</tissue>
    </source>
</reference>
<reference key="9">
    <citation type="journal article" date="1999" name="Mol. Cell. Biol.">
        <title>RGS3 inhibits G protein-mediated signaling via translocation to the membrane and binding to Galpha11.</title>
        <authorList>
            <person name="Dulin N.O."/>
            <person name="Sorokin A."/>
            <person name="Reed E."/>
            <person name="Elliott S."/>
            <person name="Kehrl J.H."/>
            <person name="Dunn M.J."/>
        </authorList>
    </citation>
    <scope>FUNCTION</scope>
    <scope>INTERACTION WITH GNA11 AND GNA13</scope>
    <scope>SUBCELLULAR LOCATION</scope>
</reference>
<reference key="10">
    <citation type="journal article" date="2000" name="J. Biol. Chem.">
        <title>Regulator of G protein signaling RGS3T is localized to the nucleus and induces apoptosis.</title>
        <authorList>
            <person name="Dulin N.O."/>
            <person name="Pratt P."/>
            <person name="Tiruppathi C."/>
            <person name="Niu J."/>
            <person name="Voyno-Yasenetskaya T."/>
            <person name="Dunn M.J."/>
        </authorList>
    </citation>
    <scope>FUNCTION</scope>
    <scope>SUBCELLULAR LOCATION</scope>
</reference>
<reference key="11">
    <citation type="journal article" date="2001" name="J. Biol. Chem.">
        <title>Regulator of G-protein signaling 3 (RGS3) inhibits G-beta1/gamma2-induced inositol phosphate production, mitogen-activated protein kinase activation, and Akt activation.</title>
        <authorList>
            <person name="Shi C.-S."/>
            <person name="Lee S.B."/>
            <person name="Sinnarajah S."/>
            <person name="Dessauer C.W."/>
            <person name="Rhee S.G."/>
            <person name="Kehrl J.H."/>
        </authorList>
    </citation>
    <scope>FUNCTION</scope>
    <scope>INTERACTION WITH HETERODIMERIC GNB1-GNG2</scope>
    <scope>SUBCELLULAR LOCATION</scope>
</reference>
<reference key="12">
    <citation type="journal article" date="2006" name="Biochem. Biophys. Res. Commun.">
        <title>Identification and Herc5-mediated ISGylation of novel target proteins.</title>
        <authorList>
            <person name="Takeuchi T."/>
            <person name="Inoue S."/>
            <person name="Yokosawa H."/>
        </authorList>
    </citation>
    <scope>ISGYLATION</scope>
</reference>
<reference key="13">
    <citation type="journal article" date="2007" name="Electrophoresis">
        <title>Toward a global characterization of the phosphoproteome in prostate cancer cells: identification of phosphoproteins in the LNCaP cell line.</title>
        <authorList>
            <person name="Giorgianni F."/>
            <person name="Zhao Y."/>
            <person name="Desiderio D.M."/>
            <person name="Beranova-Giorgianni S."/>
        </authorList>
    </citation>
    <scope>IDENTIFICATION BY MASS SPECTROMETRY [LARGE SCALE ANALYSIS]</scope>
    <source>
        <tissue>Prostate cancer</tissue>
    </source>
</reference>
<reference key="14">
    <citation type="journal article" date="2013" name="J. Proteome Res.">
        <title>Toward a comprehensive characterization of a human cancer cell phosphoproteome.</title>
        <authorList>
            <person name="Zhou H."/>
            <person name="Di Palma S."/>
            <person name="Preisinger C."/>
            <person name="Peng M."/>
            <person name="Polat A.N."/>
            <person name="Heck A.J."/>
            <person name="Mohammed S."/>
        </authorList>
    </citation>
    <scope>PHOSPHORYLATION [LARGE SCALE ANALYSIS] AT SER-674 AND SER-943</scope>
    <scope>IDENTIFICATION BY MASS SPECTROMETRY [LARGE SCALE ANALYSIS]</scope>
    <source>
        <tissue>Cervix carcinoma</tissue>
        <tissue>Erythroleukemia</tissue>
    </source>
</reference>
<reference key="15">
    <citation type="journal article" date="2014" name="J. Proteomics">
        <title>An enzyme assisted RP-RPLC approach for in-depth analysis of human liver phosphoproteome.</title>
        <authorList>
            <person name="Bian Y."/>
            <person name="Song C."/>
            <person name="Cheng K."/>
            <person name="Dong M."/>
            <person name="Wang F."/>
            <person name="Huang J."/>
            <person name="Sun D."/>
            <person name="Wang L."/>
            <person name="Ye M."/>
            <person name="Zou H."/>
        </authorList>
    </citation>
    <scope>IDENTIFICATION BY MASS SPECTROMETRY [LARGE SCALE ANALYSIS]</scope>
    <source>
        <tissue>Liver</tissue>
    </source>
</reference>
<reference key="16">
    <citation type="journal article" date="2014" name="Mol. Cell. Proteomics">
        <title>Immunoaffinity enrichment and mass spectrometry analysis of protein methylation.</title>
        <authorList>
            <person name="Guo A."/>
            <person name="Gu H."/>
            <person name="Zhou J."/>
            <person name="Mulhern D."/>
            <person name="Wang Y."/>
            <person name="Lee K.A."/>
            <person name="Yang V."/>
            <person name="Aguiar M."/>
            <person name="Kornhauser J."/>
            <person name="Jia X."/>
            <person name="Ren J."/>
            <person name="Beausoleil S.A."/>
            <person name="Silva J.C."/>
            <person name="Vemulapalli V."/>
            <person name="Bedford M.T."/>
            <person name="Comb M.J."/>
        </authorList>
    </citation>
    <scope>METHYLATION [LARGE SCALE ANALYSIS] AT ARG-448</scope>
    <scope>IDENTIFICATION BY MASS SPECTROMETRY [LARGE SCALE ANALYSIS]</scope>
    <source>
        <tissue>Colon carcinoma</tissue>
    </source>
</reference>
<organism>
    <name type="scientific">Homo sapiens</name>
    <name type="common">Human</name>
    <dbReference type="NCBI Taxonomy" id="9606"/>
    <lineage>
        <taxon>Eukaryota</taxon>
        <taxon>Metazoa</taxon>
        <taxon>Chordata</taxon>
        <taxon>Craniata</taxon>
        <taxon>Vertebrata</taxon>
        <taxon>Euteleostomi</taxon>
        <taxon>Mammalia</taxon>
        <taxon>Eutheria</taxon>
        <taxon>Euarchontoglires</taxon>
        <taxon>Primates</taxon>
        <taxon>Haplorrhini</taxon>
        <taxon>Catarrhini</taxon>
        <taxon>Hominidae</taxon>
        <taxon>Homo</taxon>
    </lineage>
</organism>
<gene>
    <name type="primary">RGS3</name>
</gene>